<feature type="chain" id="PRO_0000254335" description="ATP synthase subunit beta">
    <location>
        <begin position="1"/>
        <end position="486"/>
    </location>
</feature>
<feature type="binding site" evidence="1">
    <location>
        <begin position="164"/>
        <end position="171"/>
    </location>
    <ligand>
        <name>ATP</name>
        <dbReference type="ChEBI" id="CHEBI:30616"/>
    </ligand>
</feature>
<organism>
    <name type="scientific">Prochlorococcus marinus subsp. pastoris (strain CCMP1986 / NIES-2087 / MED4)</name>
    <dbReference type="NCBI Taxonomy" id="59919"/>
    <lineage>
        <taxon>Bacteria</taxon>
        <taxon>Bacillati</taxon>
        <taxon>Cyanobacteriota</taxon>
        <taxon>Cyanophyceae</taxon>
        <taxon>Synechococcales</taxon>
        <taxon>Prochlorococcaceae</taxon>
        <taxon>Prochlorococcus</taxon>
    </lineage>
</organism>
<reference key="1">
    <citation type="journal article" date="2003" name="Nature">
        <title>Genome divergence in two Prochlorococcus ecotypes reflects oceanic niche differentiation.</title>
        <authorList>
            <person name="Rocap G."/>
            <person name="Larimer F.W."/>
            <person name="Lamerdin J.E."/>
            <person name="Malfatti S."/>
            <person name="Chain P."/>
            <person name="Ahlgren N.A."/>
            <person name="Arellano A."/>
            <person name="Coleman M."/>
            <person name="Hauser L."/>
            <person name="Hess W.R."/>
            <person name="Johnson Z.I."/>
            <person name="Land M.L."/>
            <person name="Lindell D."/>
            <person name="Post A.F."/>
            <person name="Regala W."/>
            <person name="Shah M."/>
            <person name="Shaw S.L."/>
            <person name="Steglich C."/>
            <person name="Sullivan M.B."/>
            <person name="Ting C.S."/>
            <person name="Tolonen A."/>
            <person name="Webb E.A."/>
            <person name="Zinser E.R."/>
            <person name="Chisholm S.W."/>
        </authorList>
    </citation>
    <scope>NUCLEOTIDE SEQUENCE [LARGE SCALE GENOMIC DNA]</scope>
    <source>
        <strain>CCMP1986 / NIES-2087 / MED4</strain>
    </source>
</reference>
<gene>
    <name evidence="1" type="primary">atpD</name>
    <name evidence="1" type="synonym">atpB</name>
    <name type="ordered locus">PMM1438</name>
</gene>
<accession>Q7V049</accession>
<comment type="function">
    <text evidence="1">Produces ATP from ADP in the presence of a proton gradient across the membrane. The catalytic sites are hosted primarily by the beta subunits.</text>
</comment>
<comment type="catalytic activity">
    <reaction evidence="1">
        <text>ATP + H2O + 4 H(+)(in) = ADP + phosphate + 5 H(+)(out)</text>
        <dbReference type="Rhea" id="RHEA:57720"/>
        <dbReference type="ChEBI" id="CHEBI:15377"/>
        <dbReference type="ChEBI" id="CHEBI:15378"/>
        <dbReference type="ChEBI" id="CHEBI:30616"/>
        <dbReference type="ChEBI" id="CHEBI:43474"/>
        <dbReference type="ChEBI" id="CHEBI:456216"/>
        <dbReference type="EC" id="7.1.2.2"/>
    </reaction>
</comment>
<comment type="subunit">
    <text evidence="1">F-type ATPases have 2 components, CF(1) - the catalytic core - and CF(0) - the membrane proton channel. CF(1) has five subunits: alpha(3), beta(3), gamma(1), delta(1), epsilon(1). CF(0) has four main subunits: a(1), b(1), b'(1) and c(9-12).</text>
</comment>
<comment type="subcellular location">
    <subcellularLocation>
        <location evidence="1">Cellular thylakoid membrane</location>
        <topology evidence="1">Peripheral membrane protein</topology>
    </subcellularLocation>
</comment>
<comment type="similarity">
    <text evidence="1">Belongs to the ATPase alpha/beta chains family.</text>
</comment>
<keyword id="KW-0066">ATP synthesis</keyword>
<keyword id="KW-0067">ATP-binding</keyword>
<keyword id="KW-0139">CF(1)</keyword>
<keyword id="KW-0375">Hydrogen ion transport</keyword>
<keyword id="KW-0406">Ion transport</keyword>
<keyword id="KW-0472">Membrane</keyword>
<keyword id="KW-0547">Nucleotide-binding</keyword>
<keyword id="KW-0793">Thylakoid</keyword>
<keyword id="KW-1278">Translocase</keyword>
<keyword id="KW-0813">Transport</keyword>
<sequence>MVATPSTSAPAKGVVRQVIGPVLDVEFPAGKLPKILNALRIEAKNPAGQDIALTAEVQQLLGDHRVRAVAMSGTDGLVRGMEATDTGAPISVPVGEATLGRIFNVLGEPVDEQGPVNTSDIAPIHRSAPKLTDLETKPKVFETGIKVIDLLAPYRQGGKVGLFGGAGVGKTVLIQELINNIAKEHGGVSVFGGVGERTREGNDLYEEFKESGVINADDLSQSKVALCFGQMNEPPGARMRVGLSALTMAEHFRDVNKQDVLLFVDNIFRFVQAGSEVSALLGRMPSAVGYQPTLGTDVGALQERITSTLEGSITSIQAVYVPADDLTDPAPATTFAHLDATTVLARGLAAKGIYPAVDPLDSTSTMLQPSVVGDEHYKTARAVQSTLQRYKELQDIIAILGLDELSEEDRLTVSRARKIEKFLSQPFFVAEIFTGMSGKYVKLEDTIAGFNMILAGELDDLPEQAFYLVGNIDEVKAKAEKIKEEK</sequence>
<dbReference type="EC" id="7.1.2.2" evidence="1"/>
<dbReference type="EMBL" id="BX548174">
    <property type="protein sequence ID" value="CAE19897.1"/>
    <property type="molecule type" value="Genomic_DNA"/>
</dbReference>
<dbReference type="RefSeq" id="WP_011133067.1">
    <property type="nucleotide sequence ID" value="NC_005072.1"/>
</dbReference>
<dbReference type="SMR" id="Q7V049"/>
<dbReference type="STRING" id="59919.PMM1438"/>
<dbReference type="KEGG" id="pmm:PMM1438"/>
<dbReference type="eggNOG" id="COG0055">
    <property type="taxonomic scope" value="Bacteria"/>
</dbReference>
<dbReference type="HOGENOM" id="CLU_022398_0_2_3"/>
<dbReference type="OrthoDB" id="9801639at2"/>
<dbReference type="Proteomes" id="UP000001026">
    <property type="component" value="Chromosome"/>
</dbReference>
<dbReference type="GO" id="GO:0031676">
    <property type="term" value="C:plasma membrane-derived thylakoid membrane"/>
    <property type="evidence" value="ECO:0007669"/>
    <property type="project" value="UniProtKB-SubCell"/>
</dbReference>
<dbReference type="GO" id="GO:0045259">
    <property type="term" value="C:proton-transporting ATP synthase complex"/>
    <property type="evidence" value="ECO:0007669"/>
    <property type="project" value="UniProtKB-KW"/>
</dbReference>
<dbReference type="GO" id="GO:0005524">
    <property type="term" value="F:ATP binding"/>
    <property type="evidence" value="ECO:0007669"/>
    <property type="project" value="UniProtKB-UniRule"/>
</dbReference>
<dbReference type="GO" id="GO:0016887">
    <property type="term" value="F:ATP hydrolysis activity"/>
    <property type="evidence" value="ECO:0007669"/>
    <property type="project" value="InterPro"/>
</dbReference>
<dbReference type="GO" id="GO:0046933">
    <property type="term" value="F:proton-transporting ATP synthase activity, rotational mechanism"/>
    <property type="evidence" value="ECO:0007669"/>
    <property type="project" value="UniProtKB-UniRule"/>
</dbReference>
<dbReference type="CDD" id="cd18110">
    <property type="entry name" value="ATP-synt_F1_beta_C"/>
    <property type="match status" value="1"/>
</dbReference>
<dbReference type="CDD" id="cd18115">
    <property type="entry name" value="ATP-synt_F1_beta_N"/>
    <property type="match status" value="1"/>
</dbReference>
<dbReference type="CDD" id="cd01133">
    <property type="entry name" value="F1-ATPase_beta_CD"/>
    <property type="match status" value="1"/>
</dbReference>
<dbReference type="FunFam" id="1.10.1140.10:FF:000001">
    <property type="entry name" value="ATP synthase subunit beta"/>
    <property type="match status" value="1"/>
</dbReference>
<dbReference type="FunFam" id="3.40.50.12240:FF:000006">
    <property type="entry name" value="ATP synthase subunit beta"/>
    <property type="match status" value="1"/>
</dbReference>
<dbReference type="FunFam" id="3.40.50.300:FF:000026">
    <property type="entry name" value="ATP synthase subunit beta"/>
    <property type="match status" value="1"/>
</dbReference>
<dbReference type="FunFam" id="2.40.10.170:FF:000002">
    <property type="entry name" value="ATP synthase subunit beta, chloroplastic"/>
    <property type="match status" value="1"/>
</dbReference>
<dbReference type="Gene3D" id="2.40.10.170">
    <property type="match status" value="1"/>
</dbReference>
<dbReference type="Gene3D" id="1.10.1140.10">
    <property type="entry name" value="Bovine Mitochondrial F1-atpase, Atp Synthase Beta Chain, Chain D, domain 3"/>
    <property type="match status" value="1"/>
</dbReference>
<dbReference type="Gene3D" id="3.40.50.300">
    <property type="entry name" value="P-loop containing nucleotide triphosphate hydrolases"/>
    <property type="match status" value="1"/>
</dbReference>
<dbReference type="HAMAP" id="MF_01347">
    <property type="entry name" value="ATP_synth_beta_bact"/>
    <property type="match status" value="1"/>
</dbReference>
<dbReference type="InterPro" id="IPR003593">
    <property type="entry name" value="AAA+_ATPase"/>
</dbReference>
<dbReference type="InterPro" id="IPR055190">
    <property type="entry name" value="ATP-synt_VA_C"/>
</dbReference>
<dbReference type="InterPro" id="IPR005722">
    <property type="entry name" value="ATP_synth_F1_bsu"/>
</dbReference>
<dbReference type="InterPro" id="IPR020003">
    <property type="entry name" value="ATPase_a/bsu_AS"/>
</dbReference>
<dbReference type="InterPro" id="IPR050053">
    <property type="entry name" value="ATPase_alpha/beta_chains"/>
</dbReference>
<dbReference type="InterPro" id="IPR004100">
    <property type="entry name" value="ATPase_F1/V1/A1_a/bsu_N"/>
</dbReference>
<dbReference type="InterPro" id="IPR036121">
    <property type="entry name" value="ATPase_F1/V1/A1_a/bsu_N_sf"/>
</dbReference>
<dbReference type="InterPro" id="IPR000194">
    <property type="entry name" value="ATPase_F1/V1/A1_a/bsu_nucl-bd"/>
</dbReference>
<dbReference type="InterPro" id="IPR024034">
    <property type="entry name" value="ATPase_F1/V1_b/a_C"/>
</dbReference>
<dbReference type="InterPro" id="IPR027417">
    <property type="entry name" value="P-loop_NTPase"/>
</dbReference>
<dbReference type="NCBIfam" id="TIGR01039">
    <property type="entry name" value="atpD"/>
    <property type="match status" value="1"/>
</dbReference>
<dbReference type="PANTHER" id="PTHR15184">
    <property type="entry name" value="ATP SYNTHASE"/>
    <property type="match status" value="1"/>
</dbReference>
<dbReference type="PANTHER" id="PTHR15184:SF71">
    <property type="entry name" value="ATP SYNTHASE SUBUNIT BETA, MITOCHONDRIAL"/>
    <property type="match status" value="1"/>
</dbReference>
<dbReference type="Pfam" id="PF00006">
    <property type="entry name" value="ATP-synt_ab"/>
    <property type="match status" value="1"/>
</dbReference>
<dbReference type="Pfam" id="PF02874">
    <property type="entry name" value="ATP-synt_ab_N"/>
    <property type="match status" value="1"/>
</dbReference>
<dbReference type="Pfam" id="PF22919">
    <property type="entry name" value="ATP-synt_VA_C"/>
    <property type="match status" value="1"/>
</dbReference>
<dbReference type="SMART" id="SM00382">
    <property type="entry name" value="AAA"/>
    <property type="match status" value="1"/>
</dbReference>
<dbReference type="SUPFAM" id="SSF47917">
    <property type="entry name" value="C-terminal domain of alpha and beta subunits of F1 ATP synthase"/>
    <property type="match status" value="1"/>
</dbReference>
<dbReference type="SUPFAM" id="SSF50615">
    <property type="entry name" value="N-terminal domain of alpha and beta subunits of F1 ATP synthase"/>
    <property type="match status" value="1"/>
</dbReference>
<dbReference type="SUPFAM" id="SSF52540">
    <property type="entry name" value="P-loop containing nucleoside triphosphate hydrolases"/>
    <property type="match status" value="1"/>
</dbReference>
<dbReference type="PROSITE" id="PS00152">
    <property type="entry name" value="ATPASE_ALPHA_BETA"/>
    <property type="match status" value="1"/>
</dbReference>
<proteinExistence type="inferred from homology"/>
<protein>
    <recommendedName>
        <fullName evidence="1">ATP synthase subunit beta</fullName>
        <ecNumber evidence="1">7.1.2.2</ecNumber>
    </recommendedName>
    <alternativeName>
        <fullName evidence="1">ATP synthase F1 sector subunit beta</fullName>
    </alternativeName>
    <alternativeName>
        <fullName evidence="1">F-ATPase subunit beta</fullName>
    </alternativeName>
</protein>
<name>ATPB_PROMP</name>
<evidence type="ECO:0000255" key="1">
    <source>
        <dbReference type="HAMAP-Rule" id="MF_01347"/>
    </source>
</evidence>